<name>RL33_BURCM</name>
<accession>Q0BCL7</accession>
<comment type="similarity">
    <text evidence="1">Belongs to the bacterial ribosomal protein bL33 family.</text>
</comment>
<protein>
    <recommendedName>
        <fullName evidence="1">Large ribosomal subunit protein bL33</fullName>
    </recommendedName>
    <alternativeName>
        <fullName evidence="2">50S ribosomal protein L33</fullName>
    </alternativeName>
</protein>
<feature type="chain" id="PRO_1000115106" description="Large ribosomal subunit protein bL33">
    <location>
        <begin position="1"/>
        <end position="55"/>
    </location>
</feature>
<reference key="1">
    <citation type="submission" date="2006-08" db="EMBL/GenBank/DDBJ databases">
        <title>Complete sequence of chromosome 1 of Burkholderia cepacia AMMD.</title>
        <authorList>
            <person name="Copeland A."/>
            <person name="Lucas S."/>
            <person name="Lapidus A."/>
            <person name="Barry K."/>
            <person name="Detter J.C."/>
            <person name="Glavina del Rio T."/>
            <person name="Hammon N."/>
            <person name="Israni S."/>
            <person name="Pitluck S."/>
            <person name="Bruce D."/>
            <person name="Chain P."/>
            <person name="Malfatti S."/>
            <person name="Shin M."/>
            <person name="Vergez L."/>
            <person name="Schmutz J."/>
            <person name="Larimer F."/>
            <person name="Land M."/>
            <person name="Hauser L."/>
            <person name="Kyrpides N."/>
            <person name="Kim E."/>
            <person name="Parke J."/>
            <person name="Coenye T."/>
            <person name="Konstantinidis K."/>
            <person name="Ramette A."/>
            <person name="Tiedje J."/>
            <person name="Richardson P."/>
        </authorList>
    </citation>
    <scope>NUCLEOTIDE SEQUENCE [LARGE SCALE GENOMIC DNA]</scope>
    <source>
        <strain>ATCC BAA-244 / DSM 16087 / CCUG 44356 / LMG 19182 / AMMD</strain>
    </source>
</reference>
<evidence type="ECO:0000255" key="1">
    <source>
        <dbReference type="HAMAP-Rule" id="MF_00294"/>
    </source>
</evidence>
<evidence type="ECO:0000305" key="2"/>
<organism>
    <name type="scientific">Burkholderia ambifaria (strain ATCC BAA-244 / DSM 16087 / CCUG 44356 / LMG 19182 / AMMD)</name>
    <name type="common">Burkholderia cepacia (strain AMMD)</name>
    <dbReference type="NCBI Taxonomy" id="339670"/>
    <lineage>
        <taxon>Bacteria</taxon>
        <taxon>Pseudomonadati</taxon>
        <taxon>Pseudomonadota</taxon>
        <taxon>Betaproteobacteria</taxon>
        <taxon>Burkholderiales</taxon>
        <taxon>Burkholderiaceae</taxon>
        <taxon>Burkholderia</taxon>
        <taxon>Burkholderia cepacia complex</taxon>
    </lineage>
</organism>
<gene>
    <name evidence="1" type="primary">rpmG</name>
    <name type="ordered locus">Bamb_2550</name>
</gene>
<sequence length="55" mass="6382">MAKGARDKIKLESTAGTGHFYTTTKNKRNMPEKMAIKKFDPVVRKHVEYKETKIK</sequence>
<proteinExistence type="inferred from homology"/>
<keyword id="KW-0687">Ribonucleoprotein</keyword>
<keyword id="KW-0689">Ribosomal protein</keyword>
<dbReference type="EMBL" id="CP000440">
    <property type="protein sequence ID" value="ABI88106.1"/>
    <property type="molecule type" value="Genomic_DNA"/>
</dbReference>
<dbReference type="RefSeq" id="WP_006478046.1">
    <property type="nucleotide sequence ID" value="NZ_CP009798.1"/>
</dbReference>
<dbReference type="SMR" id="Q0BCL7"/>
<dbReference type="GeneID" id="98107655"/>
<dbReference type="KEGG" id="bam:Bamb_2550"/>
<dbReference type="PATRIC" id="fig|339670.21.peg.2357"/>
<dbReference type="eggNOG" id="COG0267">
    <property type="taxonomic scope" value="Bacteria"/>
</dbReference>
<dbReference type="Proteomes" id="UP000000662">
    <property type="component" value="Chromosome 1"/>
</dbReference>
<dbReference type="GO" id="GO:0022625">
    <property type="term" value="C:cytosolic large ribosomal subunit"/>
    <property type="evidence" value="ECO:0007669"/>
    <property type="project" value="TreeGrafter"/>
</dbReference>
<dbReference type="GO" id="GO:0003735">
    <property type="term" value="F:structural constituent of ribosome"/>
    <property type="evidence" value="ECO:0007669"/>
    <property type="project" value="InterPro"/>
</dbReference>
<dbReference type="GO" id="GO:0006412">
    <property type="term" value="P:translation"/>
    <property type="evidence" value="ECO:0007669"/>
    <property type="project" value="UniProtKB-UniRule"/>
</dbReference>
<dbReference type="FunFam" id="2.20.28.120:FF:000001">
    <property type="entry name" value="50S ribosomal protein L33"/>
    <property type="match status" value="1"/>
</dbReference>
<dbReference type="Gene3D" id="2.20.28.120">
    <property type="entry name" value="Ribosomal protein L33"/>
    <property type="match status" value="1"/>
</dbReference>
<dbReference type="HAMAP" id="MF_00294">
    <property type="entry name" value="Ribosomal_bL33"/>
    <property type="match status" value="1"/>
</dbReference>
<dbReference type="InterPro" id="IPR001705">
    <property type="entry name" value="Ribosomal_bL33"/>
</dbReference>
<dbReference type="InterPro" id="IPR018264">
    <property type="entry name" value="Ribosomal_bL33_CS"/>
</dbReference>
<dbReference type="InterPro" id="IPR038584">
    <property type="entry name" value="Ribosomal_bL33_sf"/>
</dbReference>
<dbReference type="InterPro" id="IPR011332">
    <property type="entry name" value="Ribosomal_zn-bd"/>
</dbReference>
<dbReference type="NCBIfam" id="NF001860">
    <property type="entry name" value="PRK00595.1"/>
    <property type="match status" value="1"/>
</dbReference>
<dbReference type="NCBIfam" id="TIGR01023">
    <property type="entry name" value="rpmG_bact"/>
    <property type="match status" value="1"/>
</dbReference>
<dbReference type="PANTHER" id="PTHR15238">
    <property type="entry name" value="54S RIBOSOMAL PROTEIN L39, MITOCHONDRIAL"/>
    <property type="match status" value="1"/>
</dbReference>
<dbReference type="PANTHER" id="PTHR15238:SF1">
    <property type="entry name" value="LARGE RIBOSOMAL SUBUNIT PROTEIN BL33M"/>
    <property type="match status" value="1"/>
</dbReference>
<dbReference type="Pfam" id="PF00471">
    <property type="entry name" value="Ribosomal_L33"/>
    <property type="match status" value="1"/>
</dbReference>
<dbReference type="SUPFAM" id="SSF57829">
    <property type="entry name" value="Zn-binding ribosomal proteins"/>
    <property type="match status" value="1"/>
</dbReference>
<dbReference type="PROSITE" id="PS00582">
    <property type="entry name" value="RIBOSOMAL_L33"/>
    <property type="match status" value="1"/>
</dbReference>